<proteinExistence type="evidence at transcript level"/>
<keyword id="KW-0119">Carbohydrate metabolism</keyword>
<keyword id="KW-1015">Disulfide bond</keyword>
<keyword id="KW-0326">Glycosidase</keyword>
<keyword id="KW-0378">Hydrolase</keyword>
<keyword id="KW-0624">Polysaccharide degradation</keyword>
<keyword id="KW-1185">Reference proteome</keyword>
<keyword id="KW-0964">Secreted</keyword>
<keyword id="KW-0732">Signal</keyword>
<keyword id="KW-0858">Xylan degradation</keyword>
<feature type="signal peptide" evidence="2">
    <location>
        <begin position="1"/>
        <end position="19"/>
    </location>
</feature>
<feature type="chain" id="PRO_0000393194" description="Probable endo-1,4-beta-xylanase C">
    <location>
        <begin position="20"/>
        <end position="326"/>
    </location>
</feature>
<feature type="domain" description="GH10" evidence="3">
    <location>
        <begin position="46"/>
        <end position="325"/>
    </location>
</feature>
<feature type="active site" description="Proton donor" evidence="1">
    <location>
        <position position="156"/>
    </location>
</feature>
<feature type="active site" description="Nucleophile" evidence="1">
    <location>
        <position position="262"/>
    </location>
</feature>
<feature type="disulfide bond" evidence="1">
    <location>
        <begin position="280"/>
        <end position="286"/>
    </location>
</feature>
<gene>
    <name type="primary">xlnC</name>
    <name type="ORF">ATEG_08906</name>
</gene>
<comment type="function">
    <text evidence="1">Endo-1,4-beta-xylanase involved in the hydrolysis of xylan, a major structural heterogeneous polysaccharide found in plant biomass representing the second most abundant polysaccharide in the biosphere, after cellulose.</text>
</comment>
<comment type="catalytic activity">
    <reaction>
        <text>Endohydrolysis of (1-&gt;4)-beta-D-xylosidic linkages in xylans.</text>
        <dbReference type="EC" id="3.2.1.8"/>
    </reaction>
</comment>
<comment type="pathway">
    <text>Glycan degradation; xylan degradation.</text>
</comment>
<comment type="subcellular location">
    <subcellularLocation>
        <location evidence="1">Secreted</location>
    </subcellularLocation>
</comment>
<comment type="induction">
    <text>Expressed in presence of xylan and repressed by glucose.</text>
</comment>
<comment type="similarity">
    <text evidence="4">Belongs to the glycosyl hydrolase 10 (cellulase F) family.</text>
</comment>
<name>XYNC_ASPTN</name>
<sequence>MVRLTVLAGFLLTSAACSACVIGERQAAASINNAFKAKGKKYFGTCGDQGTLSDSTNSAIVKADFGQLTPENSMKWDATEPNRGQFSFGGADYLVNYATSNGKMIRGHTLVWHSQLPGWVQGITDKNTLTSVLKNHITTVMQRYKGKIYAWDVVNEIFNEDGSLRKSVFYNVLGEDFVRIAFETARSVDPQAKLYINDYNLDNANYAKTKGMADHVRKWISQGIPIDGIGSQTHLGSGGSWTVKDALNTLASSGVSEVAITELDIAGASSTDYVNVVNACLSVSKCVGITVWGVSDKYSWRSNDKPLLFDSNFQPKAAYNAIISAL</sequence>
<dbReference type="EC" id="3.2.1.8"/>
<dbReference type="EMBL" id="CH476606">
    <property type="protein sequence ID" value="EAU31038.1"/>
    <property type="molecule type" value="Genomic_DNA"/>
</dbReference>
<dbReference type="RefSeq" id="XP_001217492.1">
    <property type="nucleotide sequence ID" value="XM_001217491.1"/>
</dbReference>
<dbReference type="SMR" id="Q0CBM8"/>
<dbReference type="STRING" id="341663.Q0CBM8"/>
<dbReference type="GeneID" id="4323089"/>
<dbReference type="eggNOG" id="ENOG502QSCW">
    <property type="taxonomic scope" value="Eukaryota"/>
</dbReference>
<dbReference type="OrthoDB" id="3055998at2759"/>
<dbReference type="UniPathway" id="UPA00114"/>
<dbReference type="Proteomes" id="UP000007963">
    <property type="component" value="Unassembled WGS sequence"/>
</dbReference>
<dbReference type="GO" id="GO:0005576">
    <property type="term" value="C:extracellular region"/>
    <property type="evidence" value="ECO:0000250"/>
    <property type="project" value="UniProtKB"/>
</dbReference>
<dbReference type="GO" id="GO:0031176">
    <property type="term" value="F:endo-1,4-beta-xylanase activity"/>
    <property type="evidence" value="ECO:0000250"/>
    <property type="project" value="UniProtKB"/>
</dbReference>
<dbReference type="GO" id="GO:0045493">
    <property type="term" value="P:xylan catabolic process"/>
    <property type="evidence" value="ECO:0000250"/>
    <property type="project" value="UniProtKB"/>
</dbReference>
<dbReference type="FunFam" id="3.20.20.80:FF:000094">
    <property type="entry name" value="Endo-1,4-beta-xylanase"/>
    <property type="match status" value="1"/>
</dbReference>
<dbReference type="Gene3D" id="3.20.20.80">
    <property type="entry name" value="Glycosidases"/>
    <property type="match status" value="1"/>
</dbReference>
<dbReference type="InterPro" id="IPR044846">
    <property type="entry name" value="GH10"/>
</dbReference>
<dbReference type="InterPro" id="IPR001000">
    <property type="entry name" value="GH10_dom"/>
</dbReference>
<dbReference type="InterPro" id="IPR017853">
    <property type="entry name" value="Glycoside_hydrolase_SF"/>
</dbReference>
<dbReference type="PANTHER" id="PTHR31490:SF76">
    <property type="entry name" value="ENDO-1,4-BETA-XYLANASE C"/>
    <property type="match status" value="1"/>
</dbReference>
<dbReference type="PANTHER" id="PTHR31490">
    <property type="entry name" value="GLYCOSYL HYDROLASE"/>
    <property type="match status" value="1"/>
</dbReference>
<dbReference type="Pfam" id="PF00331">
    <property type="entry name" value="Glyco_hydro_10"/>
    <property type="match status" value="1"/>
</dbReference>
<dbReference type="PRINTS" id="PR00134">
    <property type="entry name" value="GLHYDRLASE10"/>
</dbReference>
<dbReference type="SMART" id="SM00633">
    <property type="entry name" value="Glyco_10"/>
    <property type="match status" value="1"/>
</dbReference>
<dbReference type="SUPFAM" id="SSF51445">
    <property type="entry name" value="(Trans)glycosidases"/>
    <property type="match status" value="1"/>
</dbReference>
<dbReference type="PROSITE" id="PS51760">
    <property type="entry name" value="GH10_2"/>
    <property type="match status" value="1"/>
</dbReference>
<reference key="1">
    <citation type="submission" date="2005-09" db="EMBL/GenBank/DDBJ databases">
        <title>Annotation of the Aspergillus terreus NIH2624 genome.</title>
        <authorList>
            <person name="Birren B.W."/>
            <person name="Lander E.S."/>
            <person name="Galagan J.E."/>
            <person name="Nusbaum C."/>
            <person name="Devon K."/>
            <person name="Henn M."/>
            <person name="Ma L.-J."/>
            <person name="Jaffe D.B."/>
            <person name="Butler J."/>
            <person name="Alvarez P."/>
            <person name="Gnerre S."/>
            <person name="Grabherr M."/>
            <person name="Kleber M."/>
            <person name="Mauceli E.W."/>
            <person name="Brockman W."/>
            <person name="Rounsley S."/>
            <person name="Young S.K."/>
            <person name="LaButti K."/>
            <person name="Pushparaj V."/>
            <person name="DeCaprio D."/>
            <person name="Crawford M."/>
            <person name="Koehrsen M."/>
            <person name="Engels R."/>
            <person name="Montgomery P."/>
            <person name="Pearson M."/>
            <person name="Howarth C."/>
            <person name="Larson L."/>
            <person name="Luoma S."/>
            <person name="White J."/>
            <person name="Alvarado L."/>
            <person name="Kodira C.D."/>
            <person name="Zeng Q."/>
            <person name="Oleary S."/>
            <person name="Yandava C."/>
            <person name="Denning D.W."/>
            <person name="Nierman W.C."/>
            <person name="Milne T."/>
            <person name="Madden K."/>
        </authorList>
    </citation>
    <scope>NUCLEOTIDE SEQUENCE [LARGE SCALE GENOMIC DNA]</scope>
    <source>
        <strain>NIH 2624 / FGSC A1156</strain>
    </source>
</reference>
<organism>
    <name type="scientific">Aspergillus terreus (strain NIH 2624 / FGSC A1156)</name>
    <dbReference type="NCBI Taxonomy" id="341663"/>
    <lineage>
        <taxon>Eukaryota</taxon>
        <taxon>Fungi</taxon>
        <taxon>Dikarya</taxon>
        <taxon>Ascomycota</taxon>
        <taxon>Pezizomycotina</taxon>
        <taxon>Eurotiomycetes</taxon>
        <taxon>Eurotiomycetidae</taxon>
        <taxon>Eurotiales</taxon>
        <taxon>Aspergillaceae</taxon>
        <taxon>Aspergillus</taxon>
        <taxon>Aspergillus subgen. Circumdati</taxon>
    </lineage>
</organism>
<accession>Q0CBM8</accession>
<protein>
    <recommendedName>
        <fullName>Probable endo-1,4-beta-xylanase C</fullName>
        <shortName>Xylanase C</shortName>
        <ecNumber>3.2.1.8</ecNumber>
    </recommendedName>
    <alternativeName>
        <fullName>1,4-beta-D-xylan xylanohydrolase C</fullName>
    </alternativeName>
</protein>
<evidence type="ECO:0000250" key="1"/>
<evidence type="ECO:0000255" key="2"/>
<evidence type="ECO:0000255" key="3">
    <source>
        <dbReference type="PROSITE-ProRule" id="PRU01096"/>
    </source>
</evidence>
<evidence type="ECO:0000305" key="4"/>